<dbReference type="EC" id="2.7.7.7" evidence="2"/>
<dbReference type="EMBL" id="CR382131">
    <property type="protein sequence ID" value="CAG80023.1"/>
    <property type="molecule type" value="Genomic_DNA"/>
</dbReference>
<dbReference type="RefSeq" id="XP_504422.1">
    <property type="nucleotide sequence ID" value="XM_504422.1"/>
</dbReference>
<dbReference type="SMR" id="Q6C4J0"/>
<dbReference type="FunCoup" id="Q6C4J0">
    <property type="interactions" value="736"/>
</dbReference>
<dbReference type="STRING" id="284591.Q6C4J0"/>
<dbReference type="EnsemblFungi" id="CAG80023">
    <property type="protein sequence ID" value="CAG80023"/>
    <property type="gene ID" value="YALI0_E26367g"/>
</dbReference>
<dbReference type="KEGG" id="yli:2912373"/>
<dbReference type="VEuPathDB" id="FungiDB:YALI0_E26367g"/>
<dbReference type="HOGENOM" id="CLU_000556_0_1_1"/>
<dbReference type="InParanoid" id="Q6C4J0"/>
<dbReference type="OMA" id="MLDQCRY"/>
<dbReference type="OrthoDB" id="773at4891"/>
<dbReference type="Proteomes" id="UP000001300">
    <property type="component" value="Chromosome E"/>
</dbReference>
<dbReference type="GO" id="GO:0140445">
    <property type="term" value="C:chromosome, telomeric repeat region"/>
    <property type="evidence" value="ECO:0007669"/>
    <property type="project" value="EnsemblFungi"/>
</dbReference>
<dbReference type="GO" id="GO:0008622">
    <property type="term" value="C:epsilon DNA polymerase complex"/>
    <property type="evidence" value="ECO:0000318"/>
    <property type="project" value="GO_Central"/>
</dbReference>
<dbReference type="GO" id="GO:0051539">
    <property type="term" value="F:4 iron, 4 sulfur cluster binding"/>
    <property type="evidence" value="ECO:0007669"/>
    <property type="project" value="UniProtKB-KW"/>
</dbReference>
<dbReference type="GO" id="GO:0003677">
    <property type="term" value="F:DNA binding"/>
    <property type="evidence" value="ECO:0000318"/>
    <property type="project" value="GO_Central"/>
</dbReference>
<dbReference type="GO" id="GO:0003887">
    <property type="term" value="F:DNA-directed DNA polymerase activity"/>
    <property type="evidence" value="ECO:0000318"/>
    <property type="project" value="GO_Central"/>
</dbReference>
<dbReference type="GO" id="GO:0000166">
    <property type="term" value="F:nucleotide binding"/>
    <property type="evidence" value="ECO:0007669"/>
    <property type="project" value="InterPro"/>
</dbReference>
<dbReference type="GO" id="GO:0008310">
    <property type="term" value="F:single-stranded DNA 3'-5' DNA exonuclease activity"/>
    <property type="evidence" value="ECO:0000318"/>
    <property type="project" value="GO_Central"/>
</dbReference>
<dbReference type="GO" id="GO:0008270">
    <property type="term" value="F:zinc ion binding"/>
    <property type="evidence" value="ECO:0007669"/>
    <property type="project" value="UniProtKB-KW"/>
</dbReference>
<dbReference type="GO" id="GO:0006287">
    <property type="term" value="P:base-excision repair, gap-filling"/>
    <property type="evidence" value="ECO:0000318"/>
    <property type="project" value="GO_Central"/>
</dbReference>
<dbReference type="GO" id="GO:0034080">
    <property type="term" value="P:CENP-A containing chromatin assembly"/>
    <property type="evidence" value="ECO:0007669"/>
    <property type="project" value="EnsemblFungi"/>
</dbReference>
<dbReference type="GO" id="GO:0140529">
    <property type="term" value="P:CMG complex assembly"/>
    <property type="evidence" value="ECO:0007669"/>
    <property type="project" value="EnsemblFungi"/>
</dbReference>
<dbReference type="GO" id="GO:0045004">
    <property type="term" value="P:DNA replication proofreading"/>
    <property type="evidence" value="ECO:0000318"/>
    <property type="project" value="GO_Central"/>
</dbReference>
<dbReference type="GO" id="GO:0006272">
    <property type="term" value="P:leading strand elongation"/>
    <property type="evidence" value="ECO:0000318"/>
    <property type="project" value="GO_Central"/>
</dbReference>
<dbReference type="GO" id="GO:0000278">
    <property type="term" value="P:mitotic cell cycle"/>
    <property type="evidence" value="ECO:0000318"/>
    <property type="project" value="GO_Central"/>
</dbReference>
<dbReference type="GO" id="GO:1902975">
    <property type="term" value="P:mitotic DNA replication initiation"/>
    <property type="evidence" value="ECO:0007669"/>
    <property type="project" value="EnsemblFungi"/>
</dbReference>
<dbReference type="GO" id="GO:1903460">
    <property type="term" value="P:mitotic DNA replication leading strand elongation"/>
    <property type="evidence" value="ECO:0007669"/>
    <property type="project" value="EnsemblFungi"/>
</dbReference>
<dbReference type="GO" id="GO:0006297">
    <property type="term" value="P:nucleotide-excision repair, DNA gap filling"/>
    <property type="evidence" value="ECO:0000318"/>
    <property type="project" value="GO_Central"/>
</dbReference>
<dbReference type="GO" id="GO:0031048">
    <property type="term" value="P:regulatory ncRNA-mediated heterochromatin formation"/>
    <property type="evidence" value="ECO:0007669"/>
    <property type="project" value="EnsemblFungi"/>
</dbReference>
<dbReference type="CDD" id="cd05779">
    <property type="entry name" value="DNA_polB_epsilon_exo"/>
    <property type="match status" value="1"/>
</dbReference>
<dbReference type="CDD" id="cd05535">
    <property type="entry name" value="POLBc_epsilon"/>
    <property type="match status" value="1"/>
</dbReference>
<dbReference type="FunFam" id="1.10.132.60:FF:000003">
    <property type="entry name" value="DNA polymerase epsilon catalytic subunit"/>
    <property type="match status" value="1"/>
</dbReference>
<dbReference type="FunFam" id="3.30.342.10:FF:000017">
    <property type="entry name" value="DNA polymerase epsilon catalytic subunit"/>
    <property type="match status" value="1"/>
</dbReference>
<dbReference type="FunFam" id="3.30.420.10:FF:000010">
    <property type="entry name" value="DNA polymerase epsilon catalytic subunit"/>
    <property type="match status" value="1"/>
</dbReference>
<dbReference type="FunFam" id="3.90.1600.10:FF:000006">
    <property type="entry name" value="DNA polymerase epsilon catalytic subunit"/>
    <property type="match status" value="1"/>
</dbReference>
<dbReference type="Gene3D" id="1.10.132.60">
    <property type="entry name" value="DNA polymerase family B, C-terminal domain"/>
    <property type="match status" value="1"/>
</dbReference>
<dbReference type="Gene3D" id="3.30.342.10">
    <property type="entry name" value="DNA Polymerase, chain B, domain 1"/>
    <property type="match status" value="1"/>
</dbReference>
<dbReference type="Gene3D" id="3.90.1600.10">
    <property type="entry name" value="Palm domain of DNA polymerase"/>
    <property type="match status" value="1"/>
</dbReference>
<dbReference type="Gene3D" id="3.30.420.10">
    <property type="entry name" value="Ribonuclease H-like superfamily/Ribonuclease H"/>
    <property type="match status" value="1"/>
</dbReference>
<dbReference type="InterPro" id="IPR006172">
    <property type="entry name" value="DNA-dir_DNA_pol_B"/>
</dbReference>
<dbReference type="InterPro" id="IPR006133">
    <property type="entry name" value="DNA-dir_DNA_pol_B_exonuc"/>
</dbReference>
<dbReference type="InterPro" id="IPR043502">
    <property type="entry name" value="DNA/RNA_pol_sf"/>
</dbReference>
<dbReference type="InterPro" id="IPR042087">
    <property type="entry name" value="DNA_pol_B_thumb"/>
</dbReference>
<dbReference type="InterPro" id="IPR013697">
    <property type="entry name" value="DNA_pol_e_suA_C"/>
</dbReference>
<dbReference type="InterPro" id="IPR023211">
    <property type="entry name" value="DNA_pol_palm_dom_sf"/>
</dbReference>
<dbReference type="InterPro" id="IPR029703">
    <property type="entry name" value="POL2"/>
</dbReference>
<dbReference type="InterPro" id="IPR055191">
    <property type="entry name" value="POL2_thumb"/>
</dbReference>
<dbReference type="InterPro" id="IPR012337">
    <property type="entry name" value="RNaseH-like_sf"/>
</dbReference>
<dbReference type="InterPro" id="IPR036397">
    <property type="entry name" value="RNaseH_sf"/>
</dbReference>
<dbReference type="InterPro" id="IPR054475">
    <property type="entry name" value="Znf-DPOE"/>
</dbReference>
<dbReference type="PANTHER" id="PTHR10670">
    <property type="entry name" value="DNA POLYMERASE EPSILON CATALYTIC SUBUNIT A"/>
    <property type="match status" value="1"/>
</dbReference>
<dbReference type="PANTHER" id="PTHR10670:SF0">
    <property type="entry name" value="DNA POLYMERASE EPSILON CATALYTIC SUBUNIT A"/>
    <property type="match status" value="1"/>
</dbReference>
<dbReference type="Pfam" id="PF03104">
    <property type="entry name" value="DNA_pol_B_exo1"/>
    <property type="match status" value="1"/>
</dbReference>
<dbReference type="Pfam" id="PF08490">
    <property type="entry name" value="DUF1744"/>
    <property type="match status" value="1"/>
</dbReference>
<dbReference type="Pfam" id="PF22634">
    <property type="entry name" value="POL2_thumb"/>
    <property type="match status" value="1"/>
</dbReference>
<dbReference type="Pfam" id="PF22912">
    <property type="entry name" value="zf-DPOE"/>
    <property type="match status" value="1"/>
</dbReference>
<dbReference type="SMART" id="SM01159">
    <property type="entry name" value="DUF1744"/>
    <property type="match status" value="1"/>
</dbReference>
<dbReference type="SMART" id="SM00486">
    <property type="entry name" value="POLBc"/>
    <property type="match status" value="1"/>
</dbReference>
<dbReference type="SUPFAM" id="SSF56672">
    <property type="entry name" value="DNA/RNA polymerases"/>
    <property type="match status" value="1"/>
</dbReference>
<dbReference type="SUPFAM" id="SSF53098">
    <property type="entry name" value="Ribonuclease H-like"/>
    <property type="match status" value="1"/>
</dbReference>
<reference key="1">
    <citation type="journal article" date="2004" name="Nature">
        <title>Genome evolution in yeasts.</title>
        <authorList>
            <person name="Dujon B."/>
            <person name="Sherman D."/>
            <person name="Fischer G."/>
            <person name="Durrens P."/>
            <person name="Casaregola S."/>
            <person name="Lafontaine I."/>
            <person name="de Montigny J."/>
            <person name="Marck C."/>
            <person name="Neuveglise C."/>
            <person name="Talla E."/>
            <person name="Goffard N."/>
            <person name="Frangeul L."/>
            <person name="Aigle M."/>
            <person name="Anthouard V."/>
            <person name="Babour A."/>
            <person name="Barbe V."/>
            <person name="Barnay S."/>
            <person name="Blanchin S."/>
            <person name="Beckerich J.-M."/>
            <person name="Beyne E."/>
            <person name="Bleykasten C."/>
            <person name="Boisrame A."/>
            <person name="Boyer J."/>
            <person name="Cattolico L."/>
            <person name="Confanioleri F."/>
            <person name="de Daruvar A."/>
            <person name="Despons L."/>
            <person name="Fabre E."/>
            <person name="Fairhead C."/>
            <person name="Ferry-Dumazet H."/>
            <person name="Groppi A."/>
            <person name="Hantraye F."/>
            <person name="Hennequin C."/>
            <person name="Jauniaux N."/>
            <person name="Joyet P."/>
            <person name="Kachouri R."/>
            <person name="Kerrest A."/>
            <person name="Koszul R."/>
            <person name="Lemaire M."/>
            <person name="Lesur I."/>
            <person name="Ma L."/>
            <person name="Muller H."/>
            <person name="Nicaud J.-M."/>
            <person name="Nikolski M."/>
            <person name="Oztas S."/>
            <person name="Ozier-Kalogeropoulos O."/>
            <person name="Pellenz S."/>
            <person name="Potier S."/>
            <person name="Richard G.-F."/>
            <person name="Straub M.-L."/>
            <person name="Suleau A."/>
            <person name="Swennen D."/>
            <person name="Tekaia F."/>
            <person name="Wesolowski-Louvel M."/>
            <person name="Westhof E."/>
            <person name="Wirth B."/>
            <person name="Zeniou-Meyer M."/>
            <person name="Zivanovic Y."/>
            <person name="Bolotin-Fukuhara M."/>
            <person name="Thierry A."/>
            <person name="Bouchier C."/>
            <person name="Caudron B."/>
            <person name="Scarpelli C."/>
            <person name="Gaillardin C."/>
            <person name="Weissenbach J."/>
            <person name="Wincker P."/>
            <person name="Souciet J.-L."/>
        </authorList>
    </citation>
    <scope>NUCLEOTIDE SEQUENCE [LARGE SCALE GENOMIC DNA]</scope>
    <source>
        <strain>CLIB 122 / E 150</strain>
    </source>
</reference>
<name>DPOE_YARLI</name>
<protein>
    <recommendedName>
        <fullName>DNA polymerase epsilon catalytic subunit A</fullName>
        <ecNumber evidence="2">2.7.7.7</ecNumber>
    </recommendedName>
    <alternativeName>
        <fullName>DNA polymerase II subunit A</fullName>
    </alternativeName>
</protein>
<evidence type="ECO:0000250" key="1"/>
<evidence type="ECO:0000250" key="2">
    <source>
        <dbReference type="UniProtKB" id="P15436"/>
    </source>
</evidence>
<evidence type="ECO:0000305" key="3"/>
<sequence length="2183" mass="250638">MGRPFNGNNTHVVKQRSDEFERRRLERIEQLGQKFAAVERRDAIDDRMGFTRFSGDEKRVGWLVNMHETLLQSETAERGLAAVDYYFYDEEGGNFKSTVVFRPYFFVICKPHTEHAVKDLMEKMFERVLASTEIVTKEDLNLTNHLTGKKRKAVKLEFHNSEDLSSTRFTLSKIVDRQTQQTEQHLNIYELEGDVDTSTDVESSITGIKEFDVPFETRVAIDLDIRVGNWYEVTKENDTAVLKHMVEREYRADPVVMAYDIETEKAPLRFPDSAVDRIMMISYMIDGEGFLITNREMVSEDIEDFEYTPKPEFPGNFTIFNEPNEKAVLEKWFEHIRDVCPTVMTSYNGDFFDFPFIDKRTAFHGMNLYDEIGWKKVEEERYECSYCVHMDCLNWVKRDSYLPQGSQGLKAVTKVKLSYDPKELDPEKMTPYARDHPQILAEYSVSDAVATYYLYMKYVHPFIFSLCCIIPLNPDAVLRKGTGTLCEMLLMVKAYEGRIILPDKHKPALERHYKGHLVDNETYTGGHVESLAAGVFRSDIMVDFDIDTNSIDELLVNLDETLEFCVTVEAGKKSSDFENLDEVRDQIIEQLQELKSNPKRSDYPLIYHVDVASMYPNIMTTNRLQPDSMVDEKDCAVCDYNRPDKTCARELEWARRVDYYPVSKGDVNNLKQGLVEEYSGGRFGNGSSVEISYDEGMTEREKFQKRKGWAGLSGQEQANKLKERVAAFSLKTKARKTDSETTVQKTIVCQRENPFYVDVVQEFKQRRIDYKTKAKRWNKEAASASDPASREEAKKMAITNDSMQLAHKVILNSFYGYVMRKGSRWYSMEMAGVTCYTGAKIIKIARQTMEGLGIPLELDTDGIWCMLPKTFPEKFKCKFKDGSSYELEYPCSIMNYLVHRDFTNHQYQKLNPETGKYDTHSENSIFFELDGPYKCMMMPTSTDKGKGLKKRYVVFDDRNKIVELKGFEVKRRGELSLIKKFQSQLWDTFLEGSNLVECYAAQARVAEAWLAVIDSRGKNLSDEELIDLVCENKSMSKPVHEYGSQKSTALTTARRLAEIMGDSILTGGKLSTKYIIAVRTKNSMPVPEAKKGSDEDSSTADRAIPTLVFETESLDEKLRFLKRWMGPRWESTDPRDVIDWMYYRERLATTINKLVVIPAILLGLKNPVRGCDPPEWASDIIKQRDNPIKQSTLSSYFVKGKLPTPEPILSEEDEVMEIQVGDIESIGTTPSPSRPPGVPARVVVSKRVRKTVEETDKSTPSLPHKAPDPFADYAAYIKYAKVKWKHQKAQRDRRAHLFGESDNGIASSWVSKNAHLAQDAWHLVSIHAAEKPGQVEASVIIGDKMQRVQINVPRKVYVGSREPLKWDKFTDVTNAMAVAEEEQPKYLYRAVMSEDMYQTEMTNPESPLKDPHVTKIYEADVSPDSRALIELGSTFHLDASTPGILSKGFTHGFEAKWFKSGDSRSYLQNSGLSYAHIVHVVSSAVEIFVITPTWDAPALVFVHQSSSSEKLPDISKEYARLRRGERYKQNMDDCTVFSFPDTMQYEVEYCSNHRRMLQKVSKACDSLSGSRNGQLVFALHSPDRNVDEKVAALARIPCIRLRPVPPSTAAVGWQRDLVRRLIASFLSHGANISYLVEMARYAKMPLCHVQDTRDVIDVSYARRLIQNSVVLWWSAALSTGGALTDQAEVPVANNPGLYTNICFEIKIEHLVLNALLQSAVIQDTEGDIHNELLSNAFNPHALKTLKMVVKEWWEHGDKKRPPQDLLDNFTVWVYAPESRLFSPQLLYHTQNLTKKTFLYLAQECRKHQAQLVYADQHKLVLQTEKTELQLVYSYSNYIVRQIRTHPILKYVSVDITRYWDTFLWMDKWNYGGYSSDVIVDPSKQSESLLMHWHIANFLPETLQQEFSKWVQEYIHLLRLRKYPENRTTDVDDMPSDTPMLTDGDKDDAALLSDKFFGKGVVSYLHPKLVRRVKLLAQKLSDVLSSGDSIDAFKFPVLPGSMIQPETNPVVEFAKYVCHIYGINAKANFEVQILLRDLLNIFDINEFSEEGTFRDPSMSLKLTNMMCFKCKNPCDLDLCKDSCCTKSGFRCPLCNSLYDMVIVEQRLVGQLQRMILEYETQDFRCDKCRRVKEYELTEFCPCSGSWVTIMSAEDVHKELSIYDRCARWFELKMLGSFLRQLGYV</sequence>
<proteinExistence type="inferred from homology"/>
<feature type="chain" id="PRO_0000046466" description="DNA polymerase epsilon catalytic subunit A">
    <location>
        <begin position="1"/>
        <end position="2183"/>
    </location>
</feature>
<feature type="zinc finger region" description="CysA-type" evidence="2">
    <location>
        <begin position="2066"/>
        <end position="2093"/>
    </location>
</feature>
<feature type="short sequence motif" description="CysB motif" evidence="2">
    <location>
        <begin position="2124"/>
        <end position="2141"/>
    </location>
</feature>
<feature type="binding site" evidence="2">
    <location>
        <position position="2066"/>
    </location>
    <ligand>
        <name>Zn(2+)</name>
        <dbReference type="ChEBI" id="CHEBI:29105"/>
    </ligand>
</feature>
<feature type="binding site" evidence="2">
    <location>
        <position position="2069"/>
    </location>
    <ligand>
        <name>Zn(2+)</name>
        <dbReference type="ChEBI" id="CHEBI:29105"/>
    </ligand>
</feature>
<feature type="binding site" evidence="2">
    <location>
        <position position="2090"/>
    </location>
    <ligand>
        <name>Zn(2+)</name>
        <dbReference type="ChEBI" id="CHEBI:29105"/>
    </ligand>
</feature>
<feature type="binding site" evidence="2">
    <location>
        <position position="2093"/>
    </location>
    <ligand>
        <name>Zn(2+)</name>
        <dbReference type="ChEBI" id="CHEBI:29105"/>
    </ligand>
</feature>
<feature type="binding site" evidence="2">
    <location>
        <position position="2124"/>
    </location>
    <ligand>
        <name>[4Fe-4S] cluster</name>
        <dbReference type="ChEBI" id="CHEBI:49883"/>
    </ligand>
</feature>
<feature type="binding site" evidence="2">
    <location>
        <position position="2127"/>
    </location>
    <ligand>
        <name>[4Fe-4S] cluster</name>
        <dbReference type="ChEBI" id="CHEBI:49883"/>
    </ligand>
</feature>
<feature type="binding site" evidence="2">
    <location>
        <position position="2139"/>
    </location>
    <ligand>
        <name>[4Fe-4S] cluster</name>
        <dbReference type="ChEBI" id="CHEBI:49883"/>
    </ligand>
</feature>
<feature type="binding site" evidence="2">
    <location>
        <position position="2141"/>
    </location>
    <ligand>
        <name>[4Fe-4S] cluster</name>
        <dbReference type="ChEBI" id="CHEBI:49883"/>
    </ligand>
</feature>
<organism>
    <name type="scientific">Yarrowia lipolytica (strain CLIB 122 / E 150)</name>
    <name type="common">Yeast</name>
    <name type="synonym">Candida lipolytica</name>
    <dbReference type="NCBI Taxonomy" id="284591"/>
    <lineage>
        <taxon>Eukaryota</taxon>
        <taxon>Fungi</taxon>
        <taxon>Dikarya</taxon>
        <taxon>Ascomycota</taxon>
        <taxon>Saccharomycotina</taxon>
        <taxon>Dipodascomycetes</taxon>
        <taxon>Dipodascales</taxon>
        <taxon>Dipodascales incertae sedis</taxon>
        <taxon>Yarrowia</taxon>
    </lineage>
</organism>
<comment type="function">
    <text evidence="1">DNA polymerase II participates in chromosomal DNA replication.</text>
</comment>
<comment type="catalytic activity">
    <reaction evidence="2">
        <text>DNA(n) + a 2'-deoxyribonucleoside 5'-triphosphate = DNA(n+1) + diphosphate</text>
        <dbReference type="Rhea" id="RHEA:22508"/>
        <dbReference type="Rhea" id="RHEA-COMP:17339"/>
        <dbReference type="Rhea" id="RHEA-COMP:17340"/>
        <dbReference type="ChEBI" id="CHEBI:33019"/>
        <dbReference type="ChEBI" id="CHEBI:61560"/>
        <dbReference type="ChEBI" id="CHEBI:173112"/>
        <dbReference type="EC" id="2.7.7.7"/>
    </reaction>
</comment>
<comment type="cofactor">
    <cofactor evidence="2">
        <name>[4Fe-4S] cluster</name>
        <dbReference type="ChEBI" id="CHEBI:49883"/>
    </cofactor>
    <text evidence="2">Binds 1 [4Fe-4S] cluster.</text>
</comment>
<comment type="subunit">
    <text evidence="1">Heterotetramer. Consists of 4 subunits: POL2, DPB2, DPB3 and DPB4 (By similarity).</text>
</comment>
<comment type="subcellular location">
    <subcellularLocation>
        <location evidence="1">Nucleus</location>
    </subcellularLocation>
</comment>
<comment type="domain">
    <text evidence="2">The CysA-type zinc finger is required for PCNA-binding.</text>
</comment>
<comment type="domain">
    <text evidence="2">The CysB motif binds 1 4Fe-4S cluster and is required for the formation of polymerase complexes.</text>
</comment>
<comment type="similarity">
    <text evidence="3">Belongs to the DNA polymerase type-B family.</text>
</comment>
<keyword id="KW-0004">4Fe-4S</keyword>
<keyword id="KW-0235">DNA replication</keyword>
<keyword id="KW-0238">DNA-binding</keyword>
<keyword id="KW-0239">DNA-directed DNA polymerase</keyword>
<keyword id="KW-0408">Iron</keyword>
<keyword id="KW-0411">Iron-sulfur</keyword>
<keyword id="KW-0479">Metal-binding</keyword>
<keyword id="KW-0548">Nucleotidyltransferase</keyword>
<keyword id="KW-0539">Nucleus</keyword>
<keyword id="KW-1185">Reference proteome</keyword>
<keyword id="KW-0808">Transferase</keyword>
<keyword id="KW-0862">Zinc</keyword>
<keyword id="KW-0863">Zinc-finger</keyword>
<accession>Q6C4J0</accession>
<gene>
    <name type="primary">POL2</name>
    <name type="ordered locus">YALI0E26367g</name>
</gene>